<feature type="signal peptide" evidence="2">
    <location>
        <begin position="1"/>
        <end position="19"/>
    </location>
</feature>
<feature type="propeptide" id="PRO_0000022785" evidence="2">
    <location>
        <begin position="20"/>
        <end position="27"/>
    </location>
</feature>
<feature type="chain" id="PRO_0000022786" description="Basic phospholipase A2 S2-22">
    <location>
        <begin position="28"/>
        <end position="145"/>
    </location>
</feature>
<feature type="active site" evidence="1">
    <location>
        <position position="75"/>
    </location>
</feature>
<feature type="active site" evidence="1">
    <location>
        <position position="121"/>
    </location>
</feature>
<feature type="binding site" evidence="1">
    <location>
        <position position="55"/>
    </location>
    <ligand>
        <name>Ca(2+)</name>
        <dbReference type="ChEBI" id="CHEBI:29108"/>
    </ligand>
</feature>
<feature type="binding site" evidence="1">
    <location>
        <position position="57"/>
    </location>
    <ligand>
        <name>Ca(2+)</name>
        <dbReference type="ChEBI" id="CHEBI:29108"/>
    </ligand>
</feature>
<feature type="binding site" evidence="1">
    <location>
        <position position="59"/>
    </location>
    <ligand>
        <name>Ca(2+)</name>
        <dbReference type="ChEBI" id="CHEBI:29108"/>
    </ligand>
</feature>
<feature type="binding site" evidence="1">
    <location>
        <position position="76"/>
    </location>
    <ligand>
        <name>Ca(2+)</name>
        <dbReference type="ChEBI" id="CHEBI:29108"/>
    </ligand>
</feature>
<feature type="disulfide bond" evidence="1">
    <location>
        <begin position="38"/>
        <end position="99"/>
    </location>
</feature>
<feature type="disulfide bond" evidence="1">
    <location>
        <begin position="54"/>
        <end position="144"/>
    </location>
</feature>
<feature type="disulfide bond" evidence="1">
    <location>
        <begin position="56"/>
        <end position="72"/>
    </location>
</feature>
<feature type="disulfide bond" evidence="1">
    <location>
        <begin position="71"/>
        <end position="127"/>
    </location>
</feature>
<feature type="disulfide bond" evidence="1">
    <location>
        <begin position="78"/>
        <end position="120"/>
    </location>
</feature>
<feature type="disulfide bond" evidence="1">
    <location>
        <begin position="88"/>
        <end position="113"/>
    </location>
</feature>
<feature type="disulfide bond" evidence="1">
    <location>
        <begin position="106"/>
        <end position="118"/>
    </location>
</feature>
<organism>
    <name type="scientific">Austrelaps superbus</name>
    <name type="common">Lowland copperhead snake</name>
    <name type="synonym">Hoplocephalus superbus</name>
    <dbReference type="NCBI Taxonomy" id="29156"/>
    <lineage>
        <taxon>Eukaryota</taxon>
        <taxon>Metazoa</taxon>
        <taxon>Chordata</taxon>
        <taxon>Craniata</taxon>
        <taxon>Vertebrata</taxon>
        <taxon>Euteleostomi</taxon>
        <taxon>Lepidosauria</taxon>
        <taxon>Squamata</taxon>
        <taxon>Bifurcata</taxon>
        <taxon>Unidentata</taxon>
        <taxon>Episquamata</taxon>
        <taxon>Toxicofera</taxon>
        <taxon>Serpentes</taxon>
        <taxon>Colubroidea</taxon>
        <taxon>Elapidae</taxon>
        <taxon>Hydrophiinae</taxon>
        <taxon>Austrelaps</taxon>
    </lineage>
</organism>
<sequence>MYPAHLLVLLAVCVSLLGASDIPPQPLNLVQFSNMIQCANHGRRPTSNYMDYGCYCGKGGSGTPVDELDRCCKIHDDCYGEAEKSQKCAPYWTWYTWKCGSDGPQCDDSKTGCQRFVCDCDATAAKCFAKAPYNKENYNIKTRCQ</sequence>
<proteinExistence type="evidence at transcript level"/>
<evidence type="ECO:0000250" key="1"/>
<evidence type="ECO:0000255" key="2"/>
<evidence type="ECO:0000255" key="3">
    <source>
        <dbReference type="PROSITE-ProRule" id="PRU10035"/>
    </source>
</evidence>
<evidence type="ECO:0000255" key="4">
    <source>
        <dbReference type="PROSITE-ProRule" id="PRU10036"/>
    </source>
</evidence>
<evidence type="ECO:0000305" key="5"/>
<protein>
    <recommendedName>
        <fullName>Basic phospholipase A2 S2-22</fullName>
        <shortName>svPLA2</shortName>
        <ecNumber>3.1.1.4</ecNumber>
    </recommendedName>
    <alternativeName>
        <fullName>Phosphatidylcholine 2-acylhydrolase</fullName>
    </alternativeName>
</protein>
<comment type="function">
    <text evidence="1">Snake venom phospholipase A2 (PLA2) that inhibits collagen-induced platelet aggregation. PLA2 catalyzes the calcium-dependent hydrolysis of the 2-acyl groups in 3-sn-phosphoglycerides (By similarity).</text>
</comment>
<comment type="catalytic activity">
    <reaction evidence="3 4">
        <text>a 1,2-diacyl-sn-glycero-3-phosphocholine + H2O = a 1-acyl-sn-glycero-3-phosphocholine + a fatty acid + H(+)</text>
        <dbReference type="Rhea" id="RHEA:15801"/>
        <dbReference type="ChEBI" id="CHEBI:15377"/>
        <dbReference type="ChEBI" id="CHEBI:15378"/>
        <dbReference type="ChEBI" id="CHEBI:28868"/>
        <dbReference type="ChEBI" id="CHEBI:57643"/>
        <dbReference type="ChEBI" id="CHEBI:58168"/>
        <dbReference type="EC" id="3.1.1.4"/>
    </reaction>
</comment>
<comment type="cofactor">
    <cofactor evidence="1">
        <name>Ca(2+)</name>
        <dbReference type="ChEBI" id="CHEBI:29108"/>
    </cofactor>
    <text evidence="1">Binds 1 Ca(2+) ion.</text>
</comment>
<comment type="subcellular location">
    <subcellularLocation>
        <location evidence="1">Secreted</location>
    </subcellularLocation>
</comment>
<comment type="tissue specificity">
    <text>Expressed by the venom gland.</text>
</comment>
<comment type="similarity">
    <text evidence="5">Belongs to the phospholipase A2 family. Group I subfamily. D49 sub-subfamily.</text>
</comment>
<reference key="1">
    <citation type="journal article" date="2000" name="Arch. Biochem. Biophys.">
        <title>Phospholipase A(2) with platelet aggregation inhibitor activity from Austrelaps superbus venom: protein purification and cDNA cloning.</title>
        <authorList>
            <person name="Singh S.B."/>
            <person name="Armugam A."/>
            <person name="Kini R.M."/>
            <person name="Jeyaseelan K."/>
        </authorList>
    </citation>
    <scope>NUCLEOTIDE SEQUENCE [MRNA]</scope>
    <source>
        <tissue>Venom gland</tissue>
    </source>
</reference>
<accession>P59359</accession>
<dbReference type="EC" id="3.1.1.4"/>
<dbReference type="EMBL" id="AY178051">
    <property type="protein sequence ID" value="AAO21118.1"/>
    <property type="molecule type" value="mRNA"/>
</dbReference>
<dbReference type="SMR" id="P59359"/>
<dbReference type="GO" id="GO:0005576">
    <property type="term" value="C:extracellular region"/>
    <property type="evidence" value="ECO:0007669"/>
    <property type="project" value="UniProtKB-SubCell"/>
</dbReference>
<dbReference type="GO" id="GO:0005509">
    <property type="term" value="F:calcium ion binding"/>
    <property type="evidence" value="ECO:0007669"/>
    <property type="project" value="InterPro"/>
</dbReference>
<dbReference type="GO" id="GO:0047498">
    <property type="term" value="F:calcium-dependent phospholipase A2 activity"/>
    <property type="evidence" value="ECO:0007669"/>
    <property type="project" value="TreeGrafter"/>
</dbReference>
<dbReference type="GO" id="GO:0005543">
    <property type="term" value="F:phospholipid binding"/>
    <property type="evidence" value="ECO:0007669"/>
    <property type="project" value="TreeGrafter"/>
</dbReference>
<dbReference type="GO" id="GO:0090729">
    <property type="term" value="F:toxin activity"/>
    <property type="evidence" value="ECO:0007669"/>
    <property type="project" value="UniProtKB-KW"/>
</dbReference>
<dbReference type="GO" id="GO:0050482">
    <property type="term" value="P:arachidonate secretion"/>
    <property type="evidence" value="ECO:0007669"/>
    <property type="project" value="InterPro"/>
</dbReference>
<dbReference type="GO" id="GO:0016042">
    <property type="term" value="P:lipid catabolic process"/>
    <property type="evidence" value="ECO:0007669"/>
    <property type="project" value="UniProtKB-KW"/>
</dbReference>
<dbReference type="GO" id="GO:0006644">
    <property type="term" value="P:phospholipid metabolic process"/>
    <property type="evidence" value="ECO:0007669"/>
    <property type="project" value="InterPro"/>
</dbReference>
<dbReference type="CDD" id="cd00125">
    <property type="entry name" value="PLA2c"/>
    <property type="match status" value="1"/>
</dbReference>
<dbReference type="FunFam" id="1.20.90.10:FF:000007">
    <property type="entry name" value="Acidic phospholipase A2"/>
    <property type="match status" value="1"/>
</dbReference>
<dbReference type="Gene3D" id="1.20.90.10">
    <property type="entry name" value="Phospholipase A2 domain"/>
    <property type="match status" value="1"/>
</dbReference>
<dbReference type="InterPro" id="IPR001211">
    <property type="entry name" value="PLipase_A2"/>
</dbReference>
<dbReference type="InterPro" id="IPR033112">
    <property type="entry name" value="PLipase_A2_Asp_AS"/>
</dbReference>
<dbReference type="InterPro" id="IPR016090">
    <property type="entry name" value="PLipase_A2_dom"/>
</dbReference>
<dbReference type="InterPro" id="IPR036444">
    <property type="entry name" value="PLipase_A2_dom_sf"/>
</dbReference>
<dbReference type="InterPro" id="IPR033113">
    <property type="entry name" value="PLipase_A2_His_AS"/>
</dbReference>
<dbReference type="PANTHER" id="PTHR11716:SF51">
    <property type="entry name" value="PHOSPHOLIPASE A2"/>
    <property type="match status" value="1"/>
</dbReference>
<dbReference type="PANTHER" id="PTHR11716">
    <property type="entry name" value="PHOSPHOLIPASE A2 FAMILY MEMBER"/>
    <property type="match status" value="1"/>
</dbReference>
<dbReference type="Pfam" id="PF00068">
    <property type="entry name" value="Phospholip_A2_1"/>
    <property type="match status" value="1"/>
</dbReference>
<dbReference type="PRINTS" id="PR00389">
    <property type="entry name" value="PHPHLIPASEA2"/>
</dbReference>
<dbReference type="SMART" id="SM00085">
    <property type="entry name" value="PA2c"/>
    <property type="match status" value="1"/>
</dbReference>
<dbReference type="SUPFAM" id="SSF48619">
    <property type="entry name" value="Phospholipase A2, PLA2"/>
    <property type="match status" value="1"/>
</dbReference>
<dbReference type="PROSITE" id="PS00119">
    <property type="entry name" value="PA2_ASP"/>
    <property type="match status" value="1"/>
</dbReference>
<dbReference type="PROSITE" id="PS00118">
    <property type="entry name" value="PA2_HIS"/>
    <property type="match status" value="1"/>
</dbReference>
<name>PA2B_AUSSU</name>
<keyword id="KW-0106">Calcium</keyword>
<keyword id="KW-1015">Disulfide bond</keyword>
<keyword id="KW-1199">Hemostasis impairing toxin</keyword>
<keyword id="KW-0378">Hydrolase</keyword>
<keyword id="KW-0442">Lipid degradation</keyword>
<keyword id="KW-0443">Lipid metabolism</keyword>
<keyword id="KW-0479">Metal-binding</keyword>
<keyword id="KW-1201">Platelet aggregation inhibiting toxin</keyword>
<keyword id="KW-0964">Secreted</keyword>
<keyword id="KW-0732">Signal</keyword>
<keyword id="KW-0800">Toxin</keyword>